<evidence type="ECO:0000255" key="1">
    <source>
        <dbReference type="HAMAP-Rule" id="MF_01632"/>
    </source>
</evidence>
<accession>Q57GZ4</accession>
<gene>
    <name evidence="1" type="primary">ubiC</name>
    <name type="ordered locus">SCH_4112</name>
</gene>
<comment type="function">
    <text evidence="1">Removes the pyruvyl group from chorismate, with concomitant aromatization of the ring, to provide 4-hydroxybenzoate (4HB) for the ubiquinone pathway.</text>
</comment>
<comment type="catalytic activity">
    <reaction evidence="1">
        <text>chorismate = 4-hydroxybenzoate + pyruvate</text>
        <dbReference type="Rhea" id="RHEA:16505"/>
        <dbReference type="ChEBI" id="CHEBI:15361"/>
        <dbReference type="ChEBI" id="CHEBI:17879"/>
        <dbReference type="ChEBI" id="CHEBI:29748"/>
        <dbReference type="EC" id="4.1.3.40"/>
    </reaction>
</comment>
<comment type="pathway">
    <text evidence="1">Cofactor biosynthesis; ubiquinone biosynthesis.</text>
</comment>
<comment type="subunit">
    <text evidence="1">Monomer.</text>
</comment>
<comment type="subcellular location">
    <subcellularLocation>
        <location evidence="1">Cytoplasm</location>
    </subcellularLocation>
</comment>
<comment type="similarity">
    <text evidence="1">Belongs to the UbiC family.</text>
</comment>
<organism>
    <name type="scientific">Salmonella choleraesuis (strain SC-B67)</name>
    <dbReference type="NCBI Taxonomy" id="321314"/>
    <lineage>
        <taxon>Bacteria</taxon>
        <taxon>Pseudomonadati</taxon>
        <taxon>Pseudomonadota</taxon>
        <taxon>Gammaproteobacteria</taxon>
        <taxon>Enterobacterales</taxon>
        <taxon>Enterobacteriaceae</taxon>
        <taxon>Salmonella</taxon>
    </lineage>
</organism>
<sequence length="165" mass="18748">MSHPALTRLRALRYFDAIPALEPHLLDWLLLEDSMTKRFEQQGKRVSVTLIREAFVGQSEVEEASGLLPSESRYWLREILLCADGEPWLAGRTVVPESTLCGPEQVLQHLGKTPLGRYLFTSSTLTRDFIEIGRDATLWGRRSRLRLSGKPLLLTELFLPASPLY</sequence>
<name>UBIC_SALCH</name>
<proteinExistence type="inferred from homology"/>
<protein>
    <recommendedName>
        <fullName evidence="1">Chorismate pyruvate-lyase</fullName>
        <shortName evidence="1">CL</shortName>
        <shortName evidence="1">CPL</shortName>
        <ecNumber evidence="1">4.1.3.40</ecNumber>
    </recommendedName>
</protein>
<feature type="chain" id="PRO_0000240568" description="Chorismate pyruvate-lyase">
    <location>
        <begin position="1"/>
        <end position="165"/>
    </location>
</feature>
<feature type="binding site" evidence="1">
    <location>
        <position position="35"/>
    </location>
    <ligand>
        <name>substrate</name>
    </ligand>
</feature>
<feature type="binding site" evidence="1">
    <location>
        <position position="77"/>
    </location>
    <ligand>
        <name>substrate</name>
    </ligand>
</feature>
<feature type="binding site" evidence="1">
    <location>
        <position position="115"/>
    </location>
    <ligand>
        <name>substrate</name>
    </ligand>
</feature>
<feature type="binding site" evidence="1">
    <location>
        <position position="156"/>
    </location>
    <ligand>
        <name>substrate</name>
    </ligand>
</feature>
<keyword id="KW-0963">Cytoplasm</keyword>
<keyword id="KW-0456">Lyase</keyword>
<keyword id="KW-0670">Pyruvate</keyword>
<keyword id="KW-0831">Ubiquinone biosynthesis</keyword>
<dbReference type="EC" id="4.1.3.40" evidence="1"/>
<dbReference type="EMBL" id="AE017220">
    <property type="protein sequence ID" value="AAX68018.1"/>
    <property type="molecule type" value="Genomic_DNA"/>
</dbReference>
<dbReference type="RefSeq" id="WP_000019230.1">
    <property type="nucleotide sequence ID" value="NC_006905.1"/>
</dbReference>
<dbReference type="SMR" id="Q57GZ4"/>
<dbReference type="KEGG" id="sec:SCH_4112"/>
<dbReference type="HOGENOM" id="CLU_096824_1_0_6"/>
<dbReference type="UniPathway" id="UPA00232"/>
<dbReference type="Proteomes" id="UP000000538">
    <property type="component" value="Chromosome"/>
</dbReference>
<dbReference type="GO" id="GO:0005829">
    <property type="term" value="C:cytosol"/>
    <property type="evidence" value="ECO:0007669"/>
    <property type="project" value="TreeGrafter"/>
</dbReference>
<dbReference type="GO" id="GO:0008813">
    <property type="term" value="F:chorismate lyase activity"/>
    <property type="evidence" value="ECO:0007669"/>
    <property type="project" value="UniProtKB-UniRule"/>
</dbReference>
<dbReference type="GO" id="GO:0042866">
    <property type="term" value="P:pyruvate biosynthetic process"/>
    <property type="evidence" value="ECO:0007669"/>
    <property type="project" value="UniProtKB-UniRule"/>
</dbReference>
<dbReference type="GO" id="GO:0006744">
    <property type="term" value="P:ubiquinone biosynthetic process"/>
    <property type="evidence" value="ECO:0007669"/>
    <property type="project" value="UniProtKB-UniRule"/>
</dbReference>
<dbReference type="FunFam" id="3.40.1410.10:FF:000002">
    <property type="entry name" value="Chorismate pyruvate-lyase"/>
    <property type="match status" value="1"/>
</dbReference>
<dbReference type="Gene3D" id="3.40.1410.10">
    <property type="entry name" value="Chorismate lyase-like"/>
    <property type="match status" value="1"/>
</dbReference>
<dbReference type="HAMAP" id="MF_01632">
    <property type="entry name" value="UbiC"/>
    <property type="match status" value="1"/>
</dbReference>
<dbReference type="InterPro" id="IPR007440">
    <property type="entry name" value="Chorismate--pyruvate_lyase"/>
</dbReference>
<dbReference type="InterPro" id="IPR028978">
    <property type="entry name" value="Chorismate_lyase_/UTRA_dom_sf"/>
</dbReference>
<dbReference type="NCBIfam" id="NF008656">
    <property type="entry name" value="PRK11655.1"/>
    <property type="match status" value="1"/>
</dbReference>
<dbReference type="PANTHER" id="PTHR38683">
    <property type="entry name" value="CHORISMATE PYRUVATE-LYASE"/>
    <property type="match status" value="1"/>
</dbReference>
<dbReference type="PANTHER" id="PTHR38683:SF1">
    <property type="entry name" value="CHORISMATE PYRUVATE-LYASE"/>
    <property type="match status" value="1"/>
</dbReference>
<dbReference type="Pfam" id="PF04345">
    <property type="entry name" value="Chor_lyase"/>
    <property type="match status" value="1"/>
</dbReference>
<dbReference type="SUPFAM" id="SSF64288">
    <property type="entry name" value="Chorismate lyase-like"/>
    <property type="match status" value="1"/>
</dbReference>
<reference key="1">
    <citation type="journal article" date="2005" name="Nucleic Acids Res.">
        <title>The genome sequence of Salmonella enterica serovar Choleraesuis, a highly invasive and resistant zoonotic pathogen.</title>
        <authorList>
            <person name="Chiu C.-H."/>
            <person name="Tang P."/>
            <person name="Chu C."/>
            <person name="Hu S."/>
            <person name="Bao Q."/>
            <person name="Yu J."/>
            <person name="Chou Y.-Y."/>
            <person name="Wang H.-S."/>
            <person name="Lee Y.-S."/>
        </authorList>
    </citation>
    <scope>NUCLEOTIDE SEQUENCE [LARGE SCALE GENOMIC DNA]</scope>
    <source>
        <strain>SC-B67</strain>
    </source>
</reference>